<keyword id="KW-1185">Reference proteome</keyword>
<feature type="chain" id="PRO_0000169706" description="Uncharacterized protein YjaH">
    <location>
        <begin position="1"/>
        <end position="231"/>
    </location>
</feature>
<accession>P32681</accession>
<accession>Q2M8T8</accession>
<reference key="1">
    <citation type="journal article" date="1993" name="Nucleic Acids Res.">
        <title>Analysis of the Escherichia coli genome. IV. DNA sequence of the region from 89.2 to 92.8 minutes.</title>
        <authorList>
            <person name="Blattner F.R."/>
            <person name="Burland V.D."/>
            <person name="Plunkett G. III"/>
            <person name="Sofia H.J."/>
            <person name="Daniels D.L."/>
        </authorList>
    </citation>
    <scope>NUCLEOTIDE SEQUENCE [LARGE SCALE GENOMIC DNA]</scope>
    <source>
        <strain>K12 / MG1655 / ATCC 47076</strain>
    </source>
</reference>
<reference key="2">
    <citation type="journal article" date="1997" name="Science">
        <title>The complete genome sequence of Escherichia coli K-12.</title>
        <authorList>
            <person name="Blattner F.R."/>
            <person name="Plunkett G. III"/>
            <person name="Bloch C.A."/>
            <person name="Perna N.T."/>
            <person name="Burland V."/>
            <person name="Riley M."/>
            <person name="Collado-Vides J."/>
            <person name="Glasner J.D."/>
            <person name="Rode C.K."/>
            <person name="Mayhew G.F."/>
            <person name="Gregor J."/>
            <person name="Davis N.W."/>
            <person name="Kirkpatrick H.A."/>
            <person name="Goeden M.A."/>
            <person name="Rose D.J."/>
            <person name="Mau B."/>
            <person name="Shao Y."/>
        </authorList>
    </citation>
    <scope>NUCLEOTIDE SEQUENCE [LARGE SCALE GENOMIC DNA]</scope>
    <source>
        <strain>K12 / MG1655 / ATCC 47076</strain>
    </source>
</reference>
<reference key="3">
    <citation type="journal article" date="2006" name="Mol. Syst. Biol.">
        <title>Highly accurate genome sequences of Escherichia coli K-12 strains MG1655 and W3110.</title>
        <authorList>
            <person name="Hayashi K."/>
            <person name="Morooka N."/>
            <person name="Yamamoto Y."/>
            <person name="Fujita K."/>
            <person name="Isono K."/>
            <person name="Choi S."/>
            <person name="Ohtsubo E."/>
            <person name="Baba T."/>
            <person name="Wanner B.L."/>
            <person name="Mori H."/>
            <person name="Horiuchi T."/>
        </authorList>
    </citation>
    <scope>NUCLEOTIDE SEQUENCE [LARGE SCALE GENOMIC DNA]</scope>
    <source>
        <strain>K12 / W3110 / ATCC 27325 / DSM 5911</strain>
    </source>
</reference>
<protein>
    <recommendedName>
        <fullName>Uncharacterized protein YjaH</fullName>
    </recommendedName>
</protein>
<sequence length="231" mass="26317">MNSFNEGVVSPLLSFWRRSLMLAGALLLTACSHNSSLPPFTASGFAEDQGAVRIWRKDSGDNVHLLAVFSPWRSGDTTTREYRWQGDNLTLININVYSKPPVNIRARFDDRGDLSFMQRESDGEKQQLSNDQIDLYRYRADQIRQISDALRQGRVVLRQGRWHAMEQTVTTCEGQTIKPDLDSQAIAHIERRQSRSSVDVSVAWLEAPEGSQLLLVANSDFCRWQPNEKTF</sequence>
<dbReference type="EMBL" id="U00006">
    <property type="protein sequence ID" value="AAC43099.1"/>
    <property type="molecule type" value="Genomic_DNA"/>
</dbReference>
<dbReference type="EMBL" id="U00096">
    <property type="protein sequence ID" value="AAC76975.1"/>
    <property type="molecule type" value="Genomic_DNA"/>
</dbReference>
<dbReference type="EMBL" id="AP009048">
    <property type="protein sequence ID" value="BAE77318.1"/>
    <property type="molecule type" value="Genomic_DNA"/>
</dbReference>
<dbReference type="PIR" id="D65207">
    <property type="entry name" value="D65207"/>
</dbReference>
<dbReference type="RefSeq" id="NP_418429.1">
    <property type="nucleotide sequence ID" value="NC_000913.3"/>
</dbReference>
<dbReference type="RefSeq" id="WP_001084037.1">
    <property type="nucleotide sequence ID" value="NZ_SSZK01000047.1"/>
</dbReference>
<dbReference type="BioGRID" id="4263451">
    <property type="interactions" value="230"/>
</dbReference>
<dbReference type="DIP" id="DIP-12529N"/>
<dbReference type="FunCoup" id="P32681">
    <property type="interactions" value="21"/>
</dbReference>
<dbReference type="IntAct" id="P32681">
    <property type="interactions" value="1"/>
</dbReference>
<dbReference type="STRING" id="511145.b4001"/>
<dbReference type="jPOST" id="P32681"/>
<dbReference type="PaxDb" id="511145-b4001"/>
<dbReference type="EnsemblBacteria" id="AAC76975">
    <property type="protein sequence ID" value="AAC76975"/>
    <property type="gene ID" value="b4001"/>
</dbReference>
<dbReference type="GeneID" id="948508"/>
<dbReference type="KEGG" id="ecj:JW3965"/>
<dbReference type="KEGG" id="eco:b4001"/>
<dbReference type="KEGG" id="ecoc:C3026_21610"/>
<dbReference type="PATRIC" id="fig|511145.12.peg.4115"/>
<dbReference type="EchoBASE" id="EB1861"/>
<dbReference type="eggNOG" id="ENOG502Z82N">
    <property type="taxonomic scope" value="Bacteria"/>
</dbReference>
<dbReference type="HOGENOM" id="CLU_112915_0_0_6"/>
<dbReference type="InParanoid" id="P32681"/>
<dbReference type="OMA" id="CTWQPTE"/>
<dbReference type="OrthoDB" id="6457475at2"/>
<dbReference type="PhylomeDB" id="P32681"/>
<dbReference type="BioCyc" id="EcoCyc:EG11917-MONOMER"/>
<dbReference type="PRO" id="PR:P32681"/>
<dbReference type="Proteomes" id="UP000000625">
    <property type="component" value="Chromosome"/>
</dbReference>
<dbReference type="InterPro" id="IPR010858">
    <property type="entry name" value="DUF1481"/>
</dbReference>
<dbReference type="InterPro" id="IPR016500">
    <property type="entry name" value="UCP006993"/>
</dbReference>
<dbReference type="Pfam" id="PF07356">
    <property type="entry name" value="DUF1481"/>
    <property type="match status" value="1"/>
</dbReference>
<dbReference type="PIRSF" id="PIRSF006993">
    <property type="entry name" value="UCP006993"/>
    <property type="match status" value="1"/>
</dbReference>
<name>YJAH_ECOLI</name>
<proteinExistence type="predicted"/>
<organism>
    <name type="scientific">Escherichia coli (strain K12)</name>
    <dbReference type="NCBI Taxonomy" id="83333"/>
    <lineage>
        <taxon>Bacteria</taxon>
        <taxon>Pseudomonadati</taxon>
        <taxon>Pseudomonadota</taxon>
        <taxon>Gammaproteobacteria</taxon>
        <taxon>Enterobacterales</taxon>
        <taxon>Enterobacteriaceae</taxon>
        <taxon>Escherichia</taxon>
    </lineage>
</organism>
<gene>
    <name type="primary">yjaH</name>
    <name type="ordered locus">b4001</name>
    <name type="ordered locus">JW3965</name>
</gene>